<organism>
    <name type="scientific">Chlamydia trachomatis serovar L2 (strain ATCC VR-902B / DSM 19102 / 434/Bu)</name>
    <dbReference type="NCBI Taxonomy" id="471472"/>
    <lineage>
        <taxon>Bacteria</taxon>
        <taxon>Pseudomonadati</taxon>
        <taxon>Chlamydiota</taxon>
        <taxon>Chlamydiia</taxon>
        <taxon>Chlamydiales</taxon>
        <taxon>Chlamydiaceae</taxon>
        <taxon>Chlamydia/Chlamydophila group</taxon>
        <taxon>Chlamydia</taxon>
    </lineage>
</organism>
<proteinExistence type="inferred from homology"/>
<feature type="chain" id="PRO_1000115517" description="Trigger factor">
    <location>
        <begin position="1"/>
        <end position="442"/>
    </location>
</feature>
<feature type="domain" description="PPIase FKBP-type" evidence="1">
    <location>
        <begin position="176"/>
        <end position="259"/>
    </location>
</feature>
<evidence type="ECO:0000255" key="1">
    <source>
        <dbReference type="HAMAP-Rule" id="MF_00303"/>
    </source>
</evidence>
<dbReference type="EC" id="5.2.1.8" evidence="1"/>
<dbReference type="EMBL" id="AM884176">
    <property type="protein sequence ID" value="CAP03520.1"/>
    <property type="molecule type" value="Genomic_DNA"/>
</dbReference>
<dbReference type="RefSeq" id="WP_009873310.1">
    <property type="nucleotide sequence ID" value="NC_010287.1"/>
</dbReference>
<dbReference type="RefSeq" id="YP_001654167.1">
    <property type="nucleotide sequence ID" value="NC_010287.1"/>
</dbReference>
<dbReference type="SMR" id="B0B8T3"/>
<dbReference type="KEGG" id="ctb:CTL0076"/>
<dbReference type="PATRIC" id="fig|471472.4.peg.81"/>
<dbReference type="HOGENOM" id="CLU_065756_0_0_0"/>
<dbReference type="Proteomes" id="UP001154402">
    <property type="component" value="Chromosome"/>
</dbReference>
<dbReference type="GO" id="GO:0005737">
    <property type="term" value="C:cytoplasm"/>
    <property type="evidence" value="ECO:0007669"/>
    <property type="project" value="UniProtKB-SubCell"/>
</dbReference>
<dbReference type="GO" id="GO:0003755">
    <property type="term" value="F:peptidyl-prolyl cis-trans isomerase activity"/>
    <property type="evidence" value="ECO:0007669"/>
    <property type="project" value="UniProtKB-UniRule"/>
</dbReference>
<dbReference type="GO" id="GO:0051301">
    <property type="term" value="P:cell division"/>
    <property type="evidence" value="ECO:0007669"/>
    <property type="project" value="UniProtKB-KW"/>
</dbReference>
<dbReference type="GO" id="GO:0006457">
    <property type="term" value="P:protein folding"/>
    <property type="evidence" value="ECO:0007669"/>
    <property type="project" value="UniProtKB-UniRule"/>
</dbReference>
<dbReference type="GO" id="GO:0015031">
    <property type="term" value="P:protein transport"/>
    <property type="evidence" value="ECO:0007669"/>
    <property type="project" value="UniProtKB-UniRule"/>
</dbReference>
<dbReference type="FunFam" id="3.10.50.40:FF:000058">
    <property type="entry name" value="Trigger factor"/>
    <property type="match status" value="1"/>
</dbReference>
<dbReference type="Gene3D" id="3.10.50.40">
    <property type="match status" value="1"/>
</dbReference>
<dbReference type="Gene3D" id="3.30.70.1050">
    <property type="entry name" value="Trigger factor ribosome-binding domain"/>
    <property type="match status" value="1"/>
</dbReference>
<dbReference type="Gene3D" id="1.10.3120.10">
    <property type="entry name" value="Trigger factor, C-terminal domain"/>
    <property type="match status" value="1"/>
</dbReference>
<dbReference type="HAMAP" id="MF_00303">
    <property type="entry name" value="Trigger_factor_Tig"/>
    <property type="match status" value="1"/>
</dbReference>
<dbReference type="InterPro" id="IPR046357">
    <property type="entry name" value="PPIase_dom_sf"/>
</dbReference>
<dbReference type="InterPro" id="IPR005215">
    <property type="entry name" value="Trig_fac"/>
</dbReference>
<dbReference type="InterPro" id="IPR008880">
    <property type="entry name" value="Trigger_fac_C"/>
</dbReference>
<dbReference type="InterPro" id="IPR037041">
    <property type="entry name" value="Trigger_fac_C_sf"/>
</dbReference>
<dbReference type="InterPro" id="IPR008881">
    <property type="entry name" value="Trigger_fac_ribosome-bd_bac"/>
</dbReference>
<dbReference type="InterPro" id="IPR036611">
    <property type="entry name" value="Trigger_fac_ribosome-bd_sf"/>
</dbReference>
<dbReference type="InterPro" id="IPR027304">
    <property type="entry name" value="Trigger_fact/SurA_dom_sf"/>
</dbReference>
<dbReference type="NCBIfam" id="TIGR00115">
    <property type="entry name" value="tig"/>
    <property type="match status" value="1"/>
</dbReference>
<dbReference type="Pfam" id="PF05698">
    <property type="entry name" value="Trigger_C"/>
    <property type="match status" value="1"/>
</dbReference>
<dbReference type="Pfam" id="PF05697">
    <property type="entry name" value="Trigger_N"/>
    <property type="match status" value="1"/>
</dbReference>
<dbReference type="PIRSF" id="PIRSF003095">
    <property type="entry name" value="Trigger_factor"/>
    <property type="match status" value="1"/>
</dbReference>
<dbReference type="SUPFAM" id="SSF109998">
    <property type="entry name" value="Triger factor/SurA peptide-binding domain-like"/>
    <property type="match status" value="1"/>
</dbReference>
<dbReference type="SUPFAM" id="SSF102735">
    <property type="entry name" value="Trigger factor ribosome-binding domain"/>
    <property type="match status" value="1"/>
</dbReference>
<comment type="function">
    <text evidence="1">Involved in protein export. Acts as a chaperone by maintaining the newly synthesized protein in an open conformation. Functions as a peptidyl-prolyl cis-trans isomerase.</text>
</comment>
<comment type="catalytic activity">
    <reaction evidence="1">
        <text>[protein]-peptidylproline (omega=180) = [protein]-peptidylproline (omega=0)</text>
        <dbReference type="Rhea" id="RHEA:16237"/>
        <dbReference type="Rhea" id="RHEA-COMP:10747"/>
        <dbReference type="Rhea" id="RHEA-COMP:10748"/>
        <dbReference type="ChEBI" id="CHEBI:83833"/>
        <dbReference type="ChEBI" id="CHEBI:83834"/>
        <dbReference type="EC" id="5.2.1.8"/>
    </reaction>
</comment>
<comment type="subcellular location">
    <subcellularLocation>
        <location>Cytoplasm</location>
    </subcellularLocation>
    <text evidence="1">About half TF is bound to the ribosome near the polypeptide exit tunnel while the other half is free in the cytoplasm.</text>
</comment>
<comment type="domain">
    <text evidence="1">Consists of 3 domains; the N-terminus binds the ribosome, the middle domain has PPIase activity, while the C-terminus has intrinsic chaperone activity on its own.</text>
</comment>
<comment type="similarity">
    <text evidence="1">Belongs to the FKBP-type PPIase family. Tig subfamily.</text>
</comment>
<gene>
    <name evidence="1" type="primary">tig</name>
    <name type="ordered locus">CTL0076</name>
</gene>
<protein>
    <recommendedName>
        <fullName evidence="1">Trigger factor</fullName>
        <shortName evidence="1">TF</shortName>
        <ecNumber evidence="1">5.2.1.8</ecNumber>
    </recommendedName>
    <alternativeName>
        <fullName evidence="1">PPIase</fullName>
    </alternativeName>
</protein>
<keyword id="KW-0131">Cell cycle</keyword>
<keyword id="KW-0132">Cell division</keyword>
<keyword id="KW-0143">Chaperone</keyword>
<keyword id="KW-0963">Cytoplasm</keyword>
<keyword id="KW-0413">Isomerase</keyword>
<keyword id="KW-0697">Rotamase</keyword>
<name>TIG_CHLT2</name>
<sequence>MSSRDFSNDLFSINIEENAGCVVSAKVQANPLVTQKCHKEALKTVKKNVVLPGFRKGKAPDNIVESRYSTQVEQELRRLFLRASFEALSQMCDRKPLSPKAVRSSAIDTCNPVNGGSVSFLYEAFPVIPSLPWEQLSLPDPEPVKEISEEDLENGLKNVAYFFATKTPVTRPSQEGDFISLSLYVSKRGDENSTPVAIFENKYFKISEEDMTDSFKARFLNVSTGHRVEEEIGSEDIQSFLNGDLLTFTVNAVIEISSPEMDDEKARELQAESLEDLKKKLRIQLENQAKEAQHQKRFSDAEDALAQLIDFDLPESLLREREELLSREKLLNARLVKYCSDSELEEQKQALLEEAKADARKAVKLLFLTQKVFSEKGLSISREELQYMMDVCSRERFGGYPPKDISNEMIQELVLVARDRLTYRKAIEAISSEKKDLEVVPS</sequence>
<reference key="1">
    <citation type="journal article" date="2008" name="Genome Res.">
        <title>Chlamydia trachomatis: genome sequence analysis of lymphogranuloma venereum isolates.</title>
        <authorList>
            <person name="Thomson N.R."/>
            <person name="Holden M.T.G."/>
            <person name="Carder C."/>
            <person name="Lennard N."/>
            <person name="Lockey S.J."/>
            <person name="Marsh P."/>
            <person name="Skipp P."/>
            <person name="O'Connor C.D."/>
            <person name="Goodhead I."/>
            <person name="Norbertzcak H."/>
            <person name="Harris B."/>
            <person name="Ormond D."/>
            <person name="Rance R."/>
            <person name="Quail M.A."/>
            <person name="Parkhill J."/>
            <person name="Stephens R.S."/>
            <person name="Clarke I.N."/>
        </authorList>
    </citation>
    <scope>NUCLEOTIDE SEQUENCE [LARGE SCALE GENOMIC DNA]</scope>
    <source>
        <strain>ATCC VR-902B / DSM 19102 / 434/Bu</strain>
    </source>
</reference>
<accession>B0B8T3</accession>